<comment type="catalytic activity">
    <reaction evidence="2">
        <text>a plastoquinone + NADH + (n+1) H(+)(in) = a plastoquinol + NAD(+) + n H(+)(out)</text>
        <dbReference type="Rhea" id="RHEA:42608"/>
        <dbReference type="Rhea" id="RHEA-COMP:9561"/>
        <dbReference type="Rhea" id="RHEA-COMP:9562"/>
        <dbReference type="ChEBI" id="CHEBI:15378"/>
        <dbReference type="ChEBI" id="CHEBI:17757"/>
        <dbReference type="ChEBI" id="CHEBI:57540"/>
        <dbReference type="ChEBI" id="CHEBI:57945"/>
        <dbReference type="ChEBI" id="CHEBI:62192"/>
    </reaction>
</comment>
<comment type="catalytic activity">
    <reaction evidence="2">
        <text>a plastoquinone + NADPH + (n+1) H(+)(in) = a plastoquinol + NADP(+) + n H(+)(out)</text>
        <dbReference type="Rhea" id="RHEA:42612"/>
        <dbReference type="Rhea" id="RHEA-COMP:9561"/>
        <dbReference type="Rhea" id="RHEA-COMP:9562"/>
        <dbReference type="ChEBI" id="CHEBI:15378"/>
        <dbReference type="ChEBI" id="CHEBI:17757"/>
        <dbReference type="ChEBI" id="CHEBI:57783"/>
        <dbReference type="ChEBI" id="CHEBI:58349"/>
        <dbReference type="ChEBI" id="CHEBI:62192"/>
    </reaction>
</comment>
<comment type="subcellular location">
    <subcellularLocation>
        <location evidence="2">Plastid</location>
        <location evidence="2">Chloroplast thylakoid membrane</location>
        <topology evidence="2">Multi-pass membrane protein</topology>
    </subcellularLocation>
</comment>
<comment type="RNA editing">
    <location>
        <position position="1" evidence="1"/>
    </location>
    <text evidence="1">The initiator methionine is created by RNA editing.</text>
</comment>
<comment type="similarity">
    <text evidence="2">Belongs to the complex I subunit 4 family.</text>
</comment>
<dbReference type="EC" id="7.1.1.-" evidence="2"/>
<dbReference type="EMBL" id="AP009366">
    <property type="protein sequence ID" value="BAF49821.1"/>
    <property type="status" value="ALT_SEQ"/>
    <property type="molecule type" value="Genomic_DNA"/>
</dbReference>
<dbReference type="RefSeq" id="YP_001122996.2">
    <property type="nucleotide sequence ID" value="NC_009265.1"/>
</dbReference>
<dbReference type="SMR" id="A4QJG6"/>
<dbReference type="GeneID" id="4968543"/>
<dbReference type="GO" id="GO:0009535">
    <property type="term" value="C:chloroplast thylakoid membrane"/>
    <property type="evidence" value="ECO:0007669"/>
    <property type="project" value="UniProtKB-SubCell"/>
</dbReference>
<dbReference type="GO" id="GO:0008137">
    <property type="term" value="F:NADH dehydrogenase (ubiquinone) activity"/>
    <property type="evidence" value="ECO:0007669"/>
    <property type="project" value="InterPro"/>
</dbReference>
<dbReference type="GO" id="GO:0048039">
    <property type="term" value="F:ubiquinone binding"/>
    <property type="evidence" value="ECO:0007669"/>
    <property type="project" value="TreeGrafter"/>
</dbReference>
<dbReference type="GO" id="GO:0042773">
    <property type="term" value="P:ATP synthesis coupled electron transport"/>
    <property type="evidence" value="ECO:0007669"/>
    <property type="project" value="InterPro"/>
</dbReference>
<dbReference type="GO" id="GO:0015990">
    <property type="term" value="P:electron transport coupled proton transport"/>
    <property type="evidence" value="ECO:0007669"/>
    <property type="project" value="TreeGrafter"/>
</dbReference>
<dbReference type="HAMAP" id="MF_00491">
    <property type="entry name" value="NDH1_NuoM"/>
    <property type="match status" value="1"/>
</dbReference>
<dbReference type="InterPro" id="IPR022997">
    <property type="entry name" value="NADH_Q_OxRdtase_chain4"/>
</dbReference>
<dbReference type="InterPro" id="IPR010227">
    <property type="entry name" value="NADH_Q_OxRdtase_chainM/4"/>
</dbReference>
<dbReference type="InterPro" id="IPR003918">
    <property type="entry name" value="NADH_UbQ_OxRdtase"/>
</dbReference>
<dbReference type="InterPro" id="IPR001750">
    <property type="entry name" value="ND/Mrp_TM"/>
</dbReference>
<dbReference type="NCBIfam" id="TIGR01972">
    <property type="entry name" value="NDH_I_M"/>
    <property type="match status" value="1"/>
</dbReference>
<dbReference type="PANTHER" id="PTHR43507:SF21">
    <property type="entry name" value="NAD(P)H-QUINONE OXIDOREDUCTASE CHAIN 4, CHLOROPLASTIC"/>
    <property type="match status" value="1"/>
</dbReference>
<dbReference type="PANTHER" id="PTHR43507">
    <property type="entry name" value="NADH-UBIQUINONE OXIDOREDUCTASE CHAIN 4"/>
    <property type="match status" value="1"/>
</dbReference>
<dbReference type="Pfam" id="PF00361">
    <property type="entry name" value="Proton_antipo_M"/>
    <property type="match status" value="1"/>
</dbReference>
<dbReference type="PRINTS" id="PR01437">
    <property type="entry name" value="NUOXDRDTASE4"/>
</dbReference>
<proteinExistence type="inferred from homology"/>
<accession>A4QJG6</accession>
<name>NU4C_AETCO</name>
<sequence length="500" mass="55946">MNYFPWLTIIVVFPISAGSLMLFLPYRGNKVNKWYTICICILELLITTYAFCYNFKMDDPLIQLSEDYKWINFLDFYWRLGIDGLSIGTILLTGFITTLATLAAFPVTRDSRLFHFLMLAMYSGQIGSFSSRDLLLFFIMWELELIPVYLLLSMWGGKKRLYSATKFILYTAGSSIFLLIGVLGISLYGSNEPTLNLELLANQSYPVTLEIILYIGFLIAFAVKSPLIPLHTWLPDTHGEAHYSTCMLLAGILLKMGAYGLVRINMELLPHAHSLFSPWLMVVGTIQIIYAASTSPGQRNLKKRIAYSSVSHMGFIIIGIASITDPGLNGAILQIISHGFIGAALFFLAGTSYDRIRLVSLDEMGGMAISIPKIFTMFTILSMASLALPGMSGFVAEFIVFFGIITSQKYLLMAKIFIIVVMAIGMILTPIYLLSMSRQMFYGYKLINVQNFSFFDSGPRELFLSISSLLPIIGMGIYPDFVLSLASNKVESILSNYFYG</sequence>
<geneLocation type="chloroplast"/>
<organism>
    <name type="scientific">Aethionema cordifolium</name>
    <name type="common">Lebanon stonecress</name>
    <dbReference type="NCBI Taxonomy" id="434059"/>
    <lineage>
        <taxon>Eukaryota</taxon>
        <taxon>Viridiplantae</taxon>
        <taxon>Streptophyta</taxon>
        <taxon>Embryophyta</taxon>
        <taxon>Tracheophyta</taxon>
        <taxon>Spermatophyta</taxon>
        <taxon>Magnoliopsida</taxon>
        <taxon>eudicotyledons</taxon>
        <taxon>Gunneridae</taxon>
        <taxon>Pentapetalae</taxon>
        <taxon>rosids</taxon>
        <taxon>malvids</taxon>
        <taxon>Brassicales</taxon>
        <taxon>Brassicaceae</taxon>
        <taxon>Aethionemeae</taxon>
        <taxon>Aethionema</taxon>
    </lineage>
</organism>
<protein>
    <recommendedName>
        <fullName evidence="2">NAD(P)H-quinone oxidoreductase chain 4, chloroplastic</fullName>
        <ecNumber evidence="2">7.1.1.-</ecNumber>
    </recommendedName>
    <alternativeName>
        <fullName evidence="2">NAD(P)H dehydrogenase, chain 4</fullName>
    </alternativeName>
    <alternativeName>
        <fullName evidence="2">NADH-plastoquinone oxidoreductase chain 4</fullName>
    </alternativeName>
</protein>
<reference key="1">
    <citation type="submission" date="2007-03" db="EMBL/GenBank/DDBJ databases">
        <title>Sequencing analysis of Aethionema coridifolium chloroplast DNA.</title>
        <authorList>
            <person name="Hosouchi T."/>
            <person name="Tsuruoka H."/>
            <person name="Kotani H."/>
        </authorList>
    </citation>
    <scope>NUCLEOTIDE SEQUENCE [LARGE SCALE GENOMIC DNA]</scope>
</reference>
<feature type="chain" id="PRO_0000343268" description="NAD(P)H-quinone oxidoreductase chain 4, chloroplastic">
    <location>
        <begin position="1"/>
        <end position="500"/>
    </location>
</feature>
<feature type="transmembrane region" description="Helical" evidence="2">
    <location>
        <begin position="4"/>
        <end position="24"/>
    </location>
</feature>
<feature type="transmembrane region" description="Helical" evidence="2">
    <location>
        <begin position="35"/>
        <end position="55"/>
    </location>
</feature>
<feature type="transmembrane region" description="Helical" evidence="2">
    <location>
        <begin position="87"/>
        <end position="107"/>
    </location>
</feature>
<feature type="transmembrane region" description="Helical" evidence="2">
    <location>
        <begin position="113"/>
        <end position="130"/>
    </location>
</feature>
<feature type="transmembrane region" description="Helical" evidence="2">
    <location>
        <begin position="134"/>
        <end position="154"/>
    </location>
</feature>
<feature type="transmembrane region" description="Helical" evidence="2">
    <location>
        <begin position="167"/>
        <end position="187"/>
    </location>
</feature>
<feature type="transmembrane region" description="Helical" evidence="2">
    <location>
        <begin position="211"/>
        <end position="231"/>
    </location>
</feature>
<feature type="transmembrane region" description="Helical" evidence="2">
    <location>
        <begin position="242"/>
        <end position="262"/>
    </location>
</feature>
<feature type="transmembrane region" description="Helical" evidence="2">
    <location>
        <begin position="272"/>
        <end position="292"/>
    </location>
</feature>
<feature type="transmembrane region" description="Helical" evidence="2">
    <location>
        <begin position="305"/>
        <end position="325"/>
    </location>
</feature>
<feature type="transmembrane region" description="Helical" evidence="2">
    <location>
        <begin position="330"/>
        <end position="350"/>
    </location>
</feature>
<feature type="transmembrane region" description="Helical" evidence="2">
    <location>
        <begin position="386"/>
        <end position="406"/>
    </location>
</feature>
<feature type="transmembrane region" description="Helical" evidence="2">
    <location>
        <begin position="416"/>
        <end position="436"/>
    </location>
</feature>
<feature type="transmembrane region" description="Helical" evidence="2">
    <location>
        <begin position="462"/>
        <end position="482"/>
    </location>
</feature>
<keyword id="KW-0150">Chloroplast</keyword>
<keyword id="KW-0472">Membrane</keyword>
<keyword id="KW-0520">NAD</keyword>
<keyword id="KW-0521">NADP</keyword>
<keyword id="KW-0934">Plastid</keyword>
<keyword id="KW-0618">Plastoquinone</keyword>
<keyword id="KW-0874">Quinone</keyword>
<keyword id="KW-0691">RNA editing</keyword>
<keyword id="KW-0793">Thylakoid</keyword>
<keyword id="KW-1278">Translocase</keyword>
<keyword id="KW-0812">Transmembrane</keyword>
<keyword id="KW-1133">Transmembrane helix</keyword>
<evidence type="ECO:0000250" key="1"/>
<evidence type="ECO:0000255" key="2">
    <source>
        <dbReference type="HAMAP-Rule" id="MF_00491"/>
    </source>
</evidence>
<gene>
    <name evidence="2" type="primary">ndhD</name>
</gene>